<keyword id="KW-1185">Reference proteome</keyword>
<keyword id="KW-0687">Ribonucleoprotein</keyword>
<keyword id="KW-0689">Ribosomal protein</keyword>
<keyword id="KW-0694">RNA-binding</keyword>
<keyword id="KW-0699">rRNA-binding</keyword>
<name>RL9_SYNAS</name>
<accession>Q2LUJ5</accession>
<comment type="function">
    <text evidence="1">Binds to the 23S rRNA.</text>
</comment>
<comment type="similarity">
    <text evidence="1">Belongs to the bacterial ribosomal protein bL9 family.</text>
</comment>
<reference key="1">
    <citation type="journal article" date="2007" name="Proc. Natl. Acad. Sci. U.S.A.">
        <title>The genome of Syntrophus aciditrophicus: life at the thermodynamic limit of microbial growth.</title>
        <authorList>
            <person name="McInerney M.J."/>
            <person name="Rohlin L."/>
            <person name="Mouttaki H."/>
            <person name="Kim U."/>
            <person name="Krupp R.S."/>
            <person name="Rios-Hernandez L."/>
            <person name="Sieber J."/>
            <person name="Struchtemeyer C.G."/>
            <person name="Bhattacharyya A."/>
            <person name="Campbell J.W."/>
            <person name="Gunsalus R.P."/>
        </authorList>
    </citation>
    <scope>NUCLEOTIDE SEQUENCE [LARGE SCALE GENOMIC DNA]</scope>
    <source>
        <strain>SB</strain>
    </source>
</reference>
<dbReference type="EMBL" id="CP000252">
    <property type="protein sequence ID" value="ABC77757.1"/>
    <property type="molecule type" value="Genomic_DNA"/>
</dbReference>
<dbReference type="RefSeq" id="WP_011417779.1">
    <property type="nucleotide sequence ID" value="NC_007759.1"/>
</dbReference>
<dbReference type="SMR" id="Q2LUJ5"/>
<dbReference type="FunCoup" id="Q2LUJ5">
    <property type="interactions" value="639"/>
</dbReference>
<dbReference type="STRING" id="56780.SYN_00641"/>
<dbReference type="KEGG" id="sat:SYN_00641"/>
<dbReference type="eggNOG" id="COG0359">
    <property type="taxonomic scope" value="Bacteria"/>
</dbReference>
<dbReference type="HOGENOM" id="CLU_078938_3_0_7"/>
<dbReference type="InParanoid" id="Q2LUJ5"/>
<dbReference type="OrthoDB" id="9788336at2"/>
<dbReference type="Proteomes" id="UP000001933">
    <property type="component" value="Chromosome"/>
</dbReference>
<dbReference type="GO" id="GO:1990904">
    <property type="term" value="C:ribonucleoprotein complex"/>
    <property type="evidence" value="ECO:0007669"/>
    <property type="project" value="UniProtKB-KW"/>
</dbReference>
<dbReference type="GO" id="GO:0005840">
    <property type="term" value="C:ribosome"/>
    <property type="evidence" value="ECO:0007669"/>
    <property type="project" value="UniProtKB-KW"/>
</dbReference>
<dbReference type="GO" id="GO:0019843">
    <property type="term" value="F:rRNA binding"/>
    <property type="evidence" value="ECO:0007669"/>
    <property type="project" value="UniProtKB-UniRule"/>
</dbReference>
<dbReference type="GO" id="GO:0003735">
    <property type="term" value="F:structural constituent of ribosome"/>
    <property type="evidence" value="ECO:0007669"/>
    <property type="project" value="InterPro"/>
</dbReference>
<dbReference type="GO" id="GO:0006412">
    <property type="term" value="P:translation"/>
    <property type="evidence" value="ECO:0007669"/>
    <property type="project" value="UniProtKB-UniRule"/>
</dbReference>
<dbReference type="Gene3D" id="3.10.430.100">
    <property type="entry name" value="Ribosomal protein L9, C-terminal domain"/>
    <property type="match status" value="1"/>
</dbReference>
<dbReference type="Gene3D" id="3.40.5.10">
    <property type="entry name" value="Ribosomal protein L9, N-terminal domain"/>
    <property type="match status" value="1"/>
</dbReference>
<dbReference type="HAMAP" id="MF_00503">
    <property type="entry name" value="Ribosomal_bL9"/>
    <property type="match status" value="1"/>
</dbReference>
<dbReference type="InterPro" id="IPR000244">
    <property type="entry name" value="Ribosomal_bL9"/>
</dbReference>
<dbReference type="InterPro" id="IPR009027">
    <property type="entry name" value="Ribosomal_bL9/RNase_H1_N"/>
</dbReference>
<dbReference type="InterPro" id="IPR020594">
    <property type="entry name" value="Ribosomal_bL9_bac/chp"/>
</dbReference>
<dbReference type="InterPro" id="IPR020069">
    <property type="entry name" value="Ribosomal_bL9_C"/>
</dbReference>
<dbReference type="InterPro" id="IPR036791">
    <property type="entry name" value="Ribosomal_bL9_C_sf"/>
</dbReference>
<dbReference type="InterPro" id="IPR020070">
    <property type="entry name" value="Ribosomal_bL9_N"/>
</dbReference>
<dbReference type="InterPro" id="IPR036935">
    <property type="entry name" value="Ribosomal_bL9_N_sf"/>
</dbReference>
<dbReference type="NCBIfam" id="TIGR00158">
    <property type="entry name" value="L9"/>
    <property type="match status" value="1"/>
</dbReference>
<dbReference type="PANTHER" id="PTHR21368">
    <property type="entry name" value="50S RIBOSOMAL PROTEIN L9"/>
    <property type="match status" value="1"/>
</dbReference>
<dbReference type="Pfam" id="PF03948">
    <property type="entry name" value="Ribosomal_L9_C"/>
    <property type="match status" value="1"/>
</dbReference>
<dbReference type="Pfam" id="PF01281">
    <property type="entry name" value="Ribosomal_L9_N"/>
    <property type="match status" value="1"/>
</dbReference>
<dbReference type="SUPFAM" id="SSF55658">
    <property type="entry name" value="L9 N-domain-like"/>
    <property type="match status" value="1"/>
</dbReference>
<dbReference type="SUPFAM" id="SSF55653">
    <property type="entry name" value="Ribosomal protein L9 C-domain"/>
    <property type="match status" value="1"/>
</dbReference>
<dbReference type="PROSITE" id="PS00651">
    <property type="entry name" value="RIBOSOMAL_L9"/>
    <property type="match status" value="1"/>
</dbReference>
<sequence length="149" mass="16285">MKIILKENFETLGKAGEIVKVADGYARNFLIPKGIAAEANLRNIKALEHDKQNIVRKAEKERKRHESLAASLSGVTCTIARRVGEQDKLFGSVTAMDIEEALLAQNVKIDRKSIVLDEPIKAIGEFPIVIKLGAGVTAEIKVNVVPEQA</sequence>
<evidence type="ECO:0000255" key="1">
    <source>
        <dbReference type="HAMAP-Rule" id="MF_00503"/>
    </source>
</evidence>
<evidence type="ECO:0000305" key="2"/>
<gene>
    <name evidence="1" type="primary">rplI</name>
    <name type="ordered locus">SYNAS_18780</name>
    <name type="ORF">SYN_00641</name>
</gene>
<organism>
    <name type="scientific">Syntrophus aciditrophicus (strain SB)</name>
    <dbReference type="NCBI Taxonomy" id="56780"/>
    <lineage>
        <taxon>Bacteria</taxon>
        <taxon>Pseudomonadati</taxon>
        <taxon>Thermodesulfobacteriota</taxon>
        <taxon>Syntrophia</taxon>
        <taxon>Syntrophales</taxon>
        <taxon>Syntrophaceae</taxon>
        <taxon>Syntrophus</taxon>
    </lineage>
</organism>
<proteinExistence type="inferred from homology"/>
<feature type="chain" id="PRO_0000236608" description="Large ribosomal subunit protein bL9">
    <location>
        <begin position="1"/>
        <end position="149"/>
    </location>
</feature>
<protein>
    <recommendedName>
        <fullName evidence="1">Large ribosomal subunit protein bL9</fullName>
    </recommendedName>
    <alternativeName>
        <fullName evidence="2">50S ribosomal protein L9</fullName>
    </alternativeName>
</protein>